<sequence length="490" mass="52959">MRINPTTSGSEVSAVEKKNLGRIVKIIGPVLDVAFPPGKMPNIYNALVVQGRDNEQTNVTCEVQQLLGNNRVRAVAMSDTDGLMRGMEVIDTRAPISVPVGGSTLGRIFNVLGQPVDNLGPVDTNTTSPIHRSAPAFIQLDTKLSIFETGIKVVDLLAPYRRGGKIGLFGGAGVGKTVLIMELINNIAKAHGGVSVFGGVGERTREGNDLYLEMKESGVINEENIAESKVALVYGQMNEPPGARMRVGLTALTMAEYFRDVNEQDVLLFIDNIFRFVQAGSEVSALLGRMPSAVGYQPTLSTEMGSLQERITSTKEGSITSIQAVYVPADDLTDPAPATTFAHLDATTVLSRGLAAKGIYPAVDPLDSTSTMLQPRIVGEEHYETAQRVKQTLQRYKELQDIIAILGLDELSEEDRLTVARARKIERFLSQPFFVAEVFTGSPGKYVGLAETIRGFQLILSGELDGLPEQAFYLVGNIDEATAKAMNLKT</sequence>
<keyword id="KW-0066">ATP synthesis</keyword>
<keyword id="KW-0067">ATP-binding</keyword>
<keyword id="KW-0139">CF(1)</keyword>
<keyword id="KW-0150">Chloroplast</keyword>
<keyword id="KW-0375">Hydrogen ion transport</keyword>
<keyword id="KW-0406">Ion transport</keyword>
<keyword id="KW-0472">Membrane</keyword>
<keyword id="KW-0547">Nucleotide-binding</keyword>
<keyword id="KW-0934">Plastid</keyword>
<keyword id="KW-0793">Thylakoid</keyword>
<keyword id="KW-1278">Translocase</keyword>
<keyword id="KW-0813">Transport</keyword>
<gene>
    <name evidence="1" type="primary">atpB</name>
</gene>
<proteinExistence type="inferred from homology"/>
<dbReference type="EC" id="7.1.2.2" evidence="1"/>
<dbReference type="EMBL" id="AY100759">
    <property type="protein sequence ID" value="AAM52113.1"/>
    <property type="molecule type" value="Genomic_DNA"/>
</dbReference>
<dbReference type="SMR" id="Q7H8L9"/>
<dbReference type="GO" id="GO:0009535">
    <property type="term" value="C:chloroplast thylakoid membrane"/>
    <property type="evidence" value="ECO:0007669"/>
    <property type="project" value="UniProtKB-SubCell"/>
</dbReference>
<dbReference type="GO" id="GO:0005739">
    <property type="term" value="C:mitochondrion"/>
    <property type="evidence" value="ECO:0007669"/>
    <property type="project" value="GOC"/>
</dbReference>
<dbReference type="GO" id="GO:0045259">
    <property type="term" value="C:proton-transporting ATP synthase complex"/>
    <property type="evidence" value="ECO:0007669"/>
    <property type="project" value="UniProtKB-KW"/>
</dbReference>
<dbReference type="GO" id="GO:0005524">
    <property type="term" value="F:ATP binding"/>
    <property type="evidence" value="ECO:0007669"/>
    <property type="project" value="UniProtKB-UniRule"/>
</dbReference>
<dbReference type="GO" id="GO:0016887">
    <property type="term" value="F:ATP hydrolysis activity"/>
    <property type="evidence" value="ECO:0007669"/>
    <property type="project" value="InterPro"/>
</dbReference>
<dbReference type="GO" id="GO:0046933">
    <property type="term" value="F:proton-transporting ATP synthase activity, rotational mechanism"/>
    <property type="evidence" value="ECO:0007669"/>
    <property type="project" value="UniProtKB-UniRule"/>
</dbReference>
<dbReference type="GO" id="GO:0042776">
    <property type="term" value="P:proton motive force-driven mitochondrial ATP synthesis"/>
    <property type="evidence" value="ECO:0007669"/>
    <property type="project" value="TreeGrafter"/>
</dbReference>
<dbReference type="CDD" id="cd18110">
    <property type="entry name" value="ATP-synt_F1_beta_C"/>
    <property type="match status" value="1"/>
</dbReference>
<dbReference type="CDD" id="cd18115">
    <property type="entry name" value="ATP-synt_F1_beta_N"/>
    <property type="match status" value="1"/>
</dbReference>
<dbReference type="CDD" id="cd01133">
    <property type="entry name" value="F1-ATPase_beta_CD"/>
    <property type="match status" value="1"/>
</dbReference>
<dbReference type="FunFam" id="1.10.1140.10:FF:000001">
    <property type="entry name" value="ATP synthase subunit beta"/>
    <property type="match status" value="1"/>
</dbReference>
<dbReference type="FunFam" id="3.40.50.12240:FF:000006">
    <property type="entry name" value="ATP synthase subunit beta"/>
    <property type="match status" value="1"/>
</dbReference>
<dbReference type="FunFam" id="3.40.50.300:FF:000004">
    <property type="entry name" value="ATP synthase subunit beta"/>
    <property type="match status" value="1"/>
</dbReference>
<dbReference type="FunFam" id="2.40.10.170:FF:000002">
    <property type="entry name" value="ATP synthase subunit beta, chloroplastic"/>
    <property type="match status" value="1"/>
</dbReference>
<dbReference type="Gene3D" id="2.40.10.170">
    <property type="match status" value="1"/>
</dbReference>
<dbReference type="Gene3D" id="1.10.1140.10">
    <property type="entry name" value="Bovine Mitochondrial F1-atpase, Atp Synthase Beta Chain, Chain D, domain 3"/>
    <property type="match status" value="1"/>
</dbReference>
<dbReference type="Gene3D" id="3.40.50.300">
    <property type="entry name" value="P-loop containing nucleotide triphosphate hydrolases"/>
    <property type="match status" value="1"/>
</dbReference>
<dbReference type="HAMAP" id="MF_01347">
    <property type="entry name" value="ATP_synth_beta_bact"/>
    <property type="match status" value="1"/>
</dbReference>
<dbReference type="InterPro" id="IPR003593">
    <property type="entry name" value="AAA+_ATPase"/>
</dbReference>
<dbReference type="InterPro" id="IPR055190">
    <property type="entry name" value="ATP-synt_VA_C"/>
</dbReference>
<dbReference type="InterPro" id="IPR005722">
    <property type="entry name" value="ATP_synth_F1_bsu"/>
</dbReference>
<dbReference type="InterPro" id="IPR020003">
    <property type="entry name" value="ATPase_a/bsu_AS"/>
</dbReference>
<dbReference type="InterPro" id="IPR050053">
    <property type="entry name" value="ATPase_alpha/beta_chains"/>
</dbReference>
<dbReference type="InterPro" id="IPR004100">
    <property type="entry name" value="ATPase_F1/V1/A1_a/bsu_N"/>
</dbReference>
<dbReference type="InterPro" id="IPR036121">
    <property type="entry name" value="ATPase_F1/V1/A1_a/bsu_N_sf"/>
</dbReference>
<dbReference type="InterPro" id="IPR000194">
    <property type="entry name" value="ATPase_F1/V1/A1_a/bsu_nucl-bd"/>
</dbReference>
<dbReference type="InterPro" id="IPR024034">
    <property type="entry name" value="ATPase_F1/V1_b/a_C"/>
</dbReference>
<dbReference type="InterPro" id="IPR027417">
    <property type="entry name" value="P-loop_NTPase"/>
</dbReference>
<dbReference type="NCBIfam" id="TIGR01039">
    <property type="entry name" value="atpD"/>
    <property type="match status" value="1"/>
</dbReference>
<dbReference type="PANTHER" id="PTHR15184">
    <property type="entry name" value="ATP SYNTHASE"/>
    <property type="match status" value="1"/>
</dbReference>
<dbReference type="PANTHER" id="PTHR15184:SF71">
    <property type="entry name" value="ATP SYNTHASE SUBUNIT BETA, MITOCHONDRIAL"/>
    <property type="match status" value="1"/>
</dbReference>
<dbReference type="Pfam" id="PF00006">
    <property type="entry name" value="ATP-synt_ab"/>
    <property type="match status" value="1"/>
</dbReference>
<dbReference type="Pfam" id="PF02874">
    <property type="entry name" value="ATP-synt_ab_N"/>
    <property type="match status" value="1"/>
</dbReference>
<dbReference type="Pfam" id="PF22919">
    <property type="entry name" value="ATP-synt_VA_C"/>
    <property type="match status" value="1"/>
</dbReference>
<dbReference type="SMART" id="SM00382">
    <property type="entry name" value="AAA"/>
    <property type="match status" value="1"/>
</dbReference>
<dbReference type="SUPFAM" id="SSF47917">
    <property type="entry name" value="C-terminal domain of alpha and beta subunits of F1 ATP synthase"/>
    <property type="match status" value="1"/>
</dbReference>
<dbReference type="SUPFAM" id="SSF50615">
    <property type="entry name" value="N-terminal domain of alpha and beta subunits of F1 ATP synthase"/>
    <property type="match status" value="1"/>
</dbReference>
<dbReference type="SUPFAM" id="SSF52540">
    <property type="entry name" value="P-loop containing nucleoside triphosphate hydrolases"/>
    <property type="match status" value="1"/>
</dbReference>
<dbReference type="PROSITE" id="PS00152">
    <property type="entry name" value="ATPASE_ALPHA_BETA"/>
    <property type="match status" value="1"/>
</dbReference>
<comment type="function">
    <text evidence="1">Produces ATP from ADP in the presence of a proton gradient across the membrane. The catalytic sites are hosted primarily by the beta subunits.</text>
</comment>
<comment type="catalytic activity">
    <reaction evidence="1">
        <text>ATP + H2O + 4 H(+)(in) = ADP + phosphate + 5 H(+)(out)</text>
        <dbReference type="Rhea" id="RHEA:57720"/>
        <dbReference type="ChEBI" id="CHEBI:15377"/>
        <dbReference type="ChEBI" id="CHEBI:15378"/>
        <dbReference type="ChEBI" id="CHEBI:30616"/>
        <dbReference type="ChEBI" id="CHEBI:43474"/>
        <dbReference type="ChEBI" id="CHEBI:456216"/>
        <dbReference type="EC" id="7.1.2.2"/>
    </reaction>
</comment>
<comment type="subunit">
    <text evidence="1">F-type ATPases have 2 components, CF(1) - the catalytic core - and CF(0) - the membrane proton channel. CF(1) has five subunits: alpha(3), beta(3), gamma(1), delta(1), epsilon(1). CF(0) has four main subunits: a(1), b(1), b'(1) and c(9-12).</text>
</comment>
<comment type="subcellular location">
    <subcellularLocation>
        <location evidence="1">Plastid</location>
        <location evidence="1">Chloroplast thylakoid membrane</location>
        <topology evidence="1">Peripheral membrane protein</topology>
    </subcellularLocation>
</comment>
<comment type="similarity">
    <text evidence="1">Belongs to the ATPase alpha/beta chains family.</text>
</comment>
<protein>
    <recommendedName>
        <fullName evidence="1">ATP synthase subunit beta, chloroplastic</fullName>
        <ecNumber evidence="1">7.1.2.2</ecNumber>
    </recommendedName>
    <alternativeName>
        <fullName evidence="1">ATP synthase F1 sector subunit beta</fullName>
    </alternativeName>
    <alternativeName>
        <fullName evidence="1">F-ATPase subunit beta</fullName>
    </alternativeName>
</protein>
<geneLocation type="chloroplast"/>
<feature type="chain" id="PRO_0000254488" description="ATP synthase subunit beta, chloroplastic">
    <location>
        <begin position="1"/>
        <end position="490"/>
    </location>
</feature>
<feature type="binding site" evidence="1">
    <location>
        <begin position="170"/>
        <end position="177"/>
    </location>
    <ligand>
        <name>ATP</name>
        <dbReference type="ChEBI" id="CHEBI:30616"/>
    </ligand>
</feature>
<organism>
    <name type="scientific">Ipomoea obscura</name>
    <name type="common">Obscure morning glory</name>
    <name type="synonym">Convolvulus obscurus</name>
    <dbReference type="NCBI Taxonomy" id="89652"/>
    <lineage>
        <taxon>Eukaryota</taxon>
        <taxon>Viridiplantae</taxon>
        <taxon>Streptophyta</taxon>
        <taxon>Embryophyta</taxon>
        <taxon>Tracheophyta</taxon>
        <taxon>Spermatophyta</taxon>
        <taxon>Magnoliopsida</taxon>
        <taxon>eudicotyledons</taxon>
        <taxon>Gunneridae</taxon>
        <taxon>Pentapetalae</taxon>
        <taxon>asterids</taxon>
        <taxon>lamiids</taxon>
        <taxon>Solanales</taxon>
        <taxon>Convolvulaceae</taxon>
        <taxon>Ipomoeeae</taxon>
        <taxon>Ipomoea</taxon>
    </lineage>
</organism>
<reference key="1">
    <citation type="journal article" date="2002" name="Am. J. Bot.">
        <title>Monophyly of the Convolvulaceae and circumscription of their major lineages based on DNA sequences of multiple chloroplast loci.</title>
        <authorList>
            <person name="Stefanovic S."/>
            <person name="Krueger L."/>
            <person name="Olmstead R.G."/>
        </authorList>
        <dbReference type="AGRICOLA" id="IND23320510"/>
    </citation>
    <scope>NUCLEOTIDE SEQUENCE [GENOMIC DNA]</scope>
</reference>
<name>ATPB_IPOOB</name>
<evidence type="ECO:0000255" key="1">
    <source>
        <dbReference type="HAMAP-Rule" id="MF_01347"/>
    </source>
</evidence>
<accession>Q7H8L9</accession>